<feature type="chain" id="PRO_0000284955" description="Phosphoribosyl pyrophosphate synthase-associated protein 1">
    <location>
        <begin position="1"/>
        <end position="356"/>
    </location>
</feature>
<feature type="modified residue" description="N-acetylmethionine" evidence="2">
    <location>
        <position position="1"/>
    </location>
</feature>
<feature type="modified residue" description="Phosphoserine" evidence="2">
    <location>
        <position position="177"/>
    </location>
</feature>
<feature type="modified residue" description="Phosphoserine" evidence="2">
    <location>
        <position position="215"/>
    </location>
</feature>
<dbReference type="EMBL" id="BC123542">
    <property type="protein sequence ID" value="AAI23543.1"/>
    <property type="molecule type" value="mRNA"/>
</dbReference>
<dbReference type="RefSeq" id="NP_001070325.1">
    <property type="nucleotide sequence ID" value="NM_001076857.2"/>
</dbReference>
<dbReference type="SMR" id="Q08DW2"/>
<dbReference type="FunCoup" id="Q08DW2">
    <property type="interactions" value="1126"/>
</dbReference>
<dbReference type="STRING" id="9913.ENSBTAP00000040198"/>
<dbReference type="PaxDb" id="9913-ENSBTAP00000040198"/>
<dbReference type="GeneID" id="789409"/>
<dbReference type="KEGG" id="bta:789409"/>
<dbReference type="CTD" id="5635"/>
<dbReference type="VEuPathDB" id="HostDB:ENSBTAG00000030172"/>
<dbReference type="eggNOG" id="KOG1503">
    <property type="taxonomic scope" value="Eukaryota"/>
</dbReference>
<dbReference type="HOGENOM" id="CLU_033546_0_0_1"/>
<dbReference type="InParanoid" id="Q08DW2"/>
<dbReference type="OMA" id="GIIACPG"/>
<dbReference type="OrthoDB" id="413572at2759"/>
<dbReference type="TreeFam" id="TF106367"/>
<dbReference type="Proteomes" id="UP000009136">
    <property type="component" value="Chromosome 19"/>
</dbReference>
<dbReference type="Bgee" id="ENSBTAG00000030172">
    <property type="expression patterns" value="Expressed in caput epididymis and 103 other cell types or tissues"/>
</dbReference>
<dbReference type="GO" id="GO:0005737">
    <property type="term" value="C:cytoplasm"/>
    <property type="evidence" value="ECO:0000318"/>
    <property type="project" value="GO_Central"/>
</dbReference>
<dbReference type="GO" id="GO:0030234">
    <property type="term" value="F:enzyme regulator activity"/>
    <property type="evidence" value="ECO:0000318"/>
    <property type="project" value="GO_Central"/>
</dbReference>
<dbReference type="GO" id="GO:0000287">
    <property type="term" value="F:magnesium ion binding"/>
    <property type="evidence" value="ECO:0007669"/>
    <property type="project" value="InterPro"/>
</dbReference>
<dbReference type="GO" id="GO:0006015">
    <property type="term" value="P:5-phosphoribose 1-diphosphate biosynthetic process"/>
    <property type="evidence" value="ECO:0000318"/>
    <property type="project" value="GO_Central"/>
</dbReference>
<dbReference type="GO" id="GO:0006164">
    <property type="term" value="P:purine nucleotide biosynthetic process"/>
    <property type="evidence" value="ECO:0000318"/>
    <property type="project" value="GO_Central"/>
</dbReference>
<dbReference type="FunFam" id="3.40.50.2020:FF:000012">
    <property type="entry name" value="Phosphoribosyl pyrophosphate synthase-associated protein 2 isoform 1"/>
    <property type="match status" value="1"/>
</dbReference>
<dbReference type="FunFam" id="3.40.50.2020:FF:000014">
    <property type="entry name" value="Ribose-phosphate pyrophosphokinase 1"/>
    <property type="match status" value="1"/>
</dbReference>
<dbReference type="Gene3D" id="3.40.50.2020">
    <property type="match status" value="2"/>
</dbReference>
<dbReference type="InterPro" id="IPR029099">
    <property type="entry name" value="Pribosyltran_N"/>
</dbReference>
<dbReference type="InterPro" id="IPR029057">
    <property type="entry name" value="PRTase-like"/>
</dbReference>
<dbReference type="InterPro" id="IPR005946">
    <property type="entry name" value="Rib-P_diPkinase"/>
</dbReference>
<dbReference type="NCBIfam" id="TIGR01251">
    <property type="entry name" value="ribP_PPkin"/>
    <property type="match status" value="1"/>
</dbReference>
<dbReference type="PANTHER" id="PTHR10210:SF28">
    <property type="entry name" value="PHOSPHORIBOSYL PYROPHOSPHATE SYNTHASE-ASSOCIATED PROTEIN 1"/>
    <property type="match status" value="1"/>
</dbReference>
<dbReference type="PANTHER" id="PTHR10210">
    <property type="entry name" value="RIBOSE-PHOSPHATE DIPHOSPHOKINASE FAMILY MEMBER"/>
    <property type="match status" value="1"/>
</dbReference>
<dbReference type="Pfam" id="PF14572">
    <property type="entry name" value="Pribosyl_synth"/>
    <property type="match status" value="1"/>
</dbReference>
<dbReference type="Pfam" id="PF13793">
    <property type="entry name" value="Pribosyltran_N"/>
    <property type="match status" value="1"/>
</dbReference>
<dbReference type="SMART" id="SM01400">
    <property type="entry name" value="Pribosyltran_N"/>
    <property type="match status" value="1"/>
</dbReference>
<dbReference type="SUPFAM" id="SSF53271">
    <property type="entry name" value="PRTase-like"/>
    <property type="match status" value="2"/>
</dbReference>
<sequence>MNAARTGYRVFSANSTAACTELAKRITERLGAELGKSVVYQETNGETRVEIQESVRGQDIFIIQTIPRDVNTAVMELLIMAYALKTACARNIIGVIPYFPYSKQSKMRKRGSIVCKLLASMLAKAGLTHIITMDLHQKEIQGFFSFPVDNLRASPFLLQYIQEEIPNYRNAVIVAKSPDAAKRAQSYAERLRLGLAVIHGEAQCAEMDMDDGRHSPPMVKNATVHPGLELPLMMAKEKPPITVVGDVGGRIAIIVDDIIDDVESFVAAAEILKERGAYRIYVMATHGILSAEAPRLIEESSIDEVVVTNTVPHEVQKLQCPKIKTVDISLILSEAIRRIHNGESMAYLFRNITVDD</sequence>
<evidence type="ECO:0000250" key="1"/>
<evidence type="ECO:0000250" key="2">
    <source>
        <dbReference type="UniProtKB" id="Q14558"/>
    </source>
</evidence>
<evidence type="ECO:0000305" key="3"/>
<proteinExistence type="evidence at transcript level"/>
<gene>
    <name type="primary">PRPSAP1</name>
</gene>
<reference key="1">
    <citation type="submission" date="2006-09" db="EMBL/GenBank/DDBJ databases">
        <authorList>
            <consortium name="NIH - Mammalian Gene Collection (MGC) project"/>
        </authorList>
    </citation>
    <scope>NUCLEOTIDE SEQUENCE [LARGE SCALE MRNA]</scope>
    <source>
        <strain>Hereford</strain>
        <tissue>Fetal pons</tissue>
    </source>
</reference>
<keyword id="KW-0007">Acetylation</keyword>
<keyword id="KW-0545">Nucleotide biosynthesis</keyword>
<keyword id="KW-0597">Phosphoprotein</keyword>
<keyword id="KW-1185">Reference proteome</keyword>
<comment type="function">
    <text evidence="1">Seems to play a negative regulatory role in 5-phosphoribose 1-diphosphate synthesis.</text>
</comment>
<comment type="subunit">
    <text evidence="1">Binds to PRPS1 and PRPS2.</text>
</comment>
<comment type="similarity">
    <text evidence="3">Belongs to the ribose-phosphate pyrophosphokinase family.</text>
</comment>
<organism>
    <name type="scientific">Bos taurus</name>
    <name type="common">Bovine</name>
    <dbReference type="NCBI Taxonomy" id="9913"/>
    <lineage>
        <taxon>Eukaryota</taxon>
        <taxon>Metazoa</taxon>
        <taxon>Chordata</taxon>
        <taxon>Craniata</taxon>
        <taxon>Vertebrata</taxon>
        <taxon>Euteleostomi</taxon>
        <taxon>Mammalia</taxon>
        <taxon>Eutheria</taxon>
        <taxon>Laurasiatheria</taxon>
        <taxon>Artiodactyla</taxon>
        <taxon>Ruminantia</taxon>
        <taxon>Pecora</taxon>
        <taxon>Bovidae</taxon>
        <taxon>Bovinae</taxon>
        <taxon>Bos</taxon>
    </lineage>
</organism>
<protein>
    <recommendedName>
        <fullName>Phosphoribosyl pyrophosphate synthase-associated protein 1</fullName>
        <shortName>PRPP synthase-associated protein 1</shortName>
    </recommendedName>
</protein>
<accession>Q08DW2</accession>
<name>KPRA_BOVIN</name>